<keyword id="KW-1003">Cell membrane</keyword>
<keyword id="KW-0472">Membrane</keyword>
<keyword id="KW-1185">Reference proteome</keyword>
<keyword id="KW-0812">Transmembrane</keyword>
<keyword id="KW-1133">Transmembrane helix</keyword>
<reference key="1">
    <citation type="journal article" date="1996" name="Microbiology">
        <title>Sequencing of a 65 kb region of the Bacillus subtilis genome containing the lic and cel loci, and creation of a 177 kb contig covering the gnt-sacXY region.</title>
        <authorList>
            <person name="Yoshida K."/>
            <person name="Shindo K."/>
            <person name="Sano H."/>
            <person name="Seki S."/>
            <person name="Fujimura M."/>
            <person name="Yanai N."/>
            <person name="Miwa Y."/>
            <person name="Fujita Y."/>
        </authorList>
    </citation>
    <scope>NUCLEOTIDE SEQUENCE [GENOMIC DNA]</scope>
    <source>
        <strain>168 / BGSC1A1</strain>
    </source>
</reference>
<reference key="2">
    <citation type="journal article" date="1997" name="Nature">
        <title>The complete genome sequence of the Gram-positive bacterium Bacillus subtilis.</title>
        <authorList>
            <person name="Kunst F."/>
            <person name="Ogasawara N."/>
            <person name="Moszer I."/>
            <person name="Albertini A.M."/>
            <person name="Alloni G."/>
            <person name="Azevedo V."/>
            <person name="Bertero M.G."/>
            <person name="Bessieres P."/>
            <person name="Bolotin A."/>
            <person name="Borchert S."/>
            <person name="Borriss R."/>
            <person name="Boursier L."/>
            <person name="Brans A."/>
            <person name="Braun M."/>
            <person name="Brignell S.C."/>
            <person name="Bron S."/>
            <person name="Brouillet S."/>
            <person name="Bruschi C.V."/>
            <person name="Caldwell B."/>
            <person name="Capuano V."/>
            <person name="Carter N.M."/>
            <person name="Choi S.-K."/>
            <person name="Codani J.-J."/>
            <person name="Connerton I.F."/>
            <person name="Cummings N.J."/>
            <person name="Daniel R.A."/>
            <person name="Denizot F."/>
            <person name="Devine K.M."/>
            <person name="Duesterhoeft A."/>
            <person name="Ehrlich S.D."/>
            <person name="Emmerson P.T."/>
            <person name="Entian K.-D."/>
            <person name="Errington J."/>
            <person name="Fabret C."/>
            <person name="Ferrari E."/>
            <person name="Foulger D."/>
            <person name="Fritz C."/>
            <person name="Fujita M."/>
            <person name="Fujita Y."/>
            <person name="Fuma S."/>
            <person name="Galizzi A."/>
            <person name="Galleron N."/>
            <person name="Ghim S.-Y."/>
            <person name="Glaser P."/>
            <person name="Goffeau A."/>
            <person name="Golightly E.J."/>
            <person name="Grandi G."/>
            <person name="Guiseppi G."/>
            <person name="Guy B.J."/>
            <person name="Haga K."/>
            <person name="Haiech J."/>
            <person name="Harwood C.R."/>
            <person name="Henaut A."/>
            <person name="Hilbert H."/>
            <person name="Holsappel S."/>
            <person name="Hosono S."/>
            <person name="Hullo M.-F."/>
            <person name="Itaya M."/>
            <person name="Jones L.-M."/>
            <person name="Joris B."/>
            <person name="Karamata D."/>
            <person name="Kasahara Y."/>
            <person name="Klaerr-Blanchard M."/>
            <person name="Klein C."/>
            <person name="Kobayashi Y."/>
            <person name="Koetter P."/>
            <person name="Koningstein G."/>
            <person name="Krogh S."/>
            <person name="Kumano M."/>
            <person name="Kurita K."/>
            <person name="Lapidus A."/>
            <person name="Lardinois S."/>
            <person name="Lauber J."/>
            <person name="Lazarevic V."/>
            <person name="Lee S.-M."/>
            <person name="Levine A."/>
            <person name="Liu H."/>
            <person name="Masuda S."/>
            <person name="Mauel C."/>
            <person name="Medigue C."/>
            <person name="Medina N."/>
            <person name="Mellado R.P."/>
            <person name="Mizuno M."/>
            <person name="Moestl D."/>
            <person name="Nakai S."/>
            <person name="Noback M."/>
            <person name="Noone D."/>
            <person name="O'Reilly M."/>
            <person name="Ogawa K."/>
            <person name="Ogiwara A."/>
            <person name="Oudega B."/>
            <person name="Park S.-H."/>
            <person name="Parro V."/>
            <person name="Pohl T.M."/>
            <person name="Portetelle D."/>
            <person name="Porwollik S."/>
            <person name="Prescott A.M."/>
            <person name="Presecan E."/>
            <person name="Pujic P."/>
            <person name="Purnelle B."/>
            <person name="Rapoport G."/>
            <person name="Rey M."/>
            <person name="Reynolds S."/>
            <person name="Rieger M."/>
            <person name="Rivolta C."/>
            <person name="Rocha E."/>
            <person name="Roche B."/>
            <person name="Rose M."/>
            <person name="Sadaie Y."/>
            <person name="Sato T."/>
            <person name="Scanlan E."/>
            <person name="Schleich S."/>
            <person name="Schroeter R."/>
            <person name="Scoffone F."/>
            <person name="Sekiguchi J."/>
            <person name="Sekowska A."/>
            <person name="Seror S.J."/>
            <person name="Serror P."/>
            <person name="Shin B.-S."/>
            <person name="Soldo B."/>
            <person name="Sorokin A."/>
            <person name="Tacconi E."/>
            <person name="Takagi T."/>
            <person name="Takahashi H."/>
            <person name="Takemaru K."/>
            <person name="Takeuchi M."/>
            <person name="Tamakoshi A."/>
            <person name="Tanaka T."/>
            <person name="Terpstra P."/>
            <person name="Tognoni A."/>
            <person name="Tosato V."/>
            <person name="Uchiyama S."/>
            <person name="Vandenbol M."/>
            <person name="Vannier F."/>
            <person name="Vassarotti A."/>
            <person name="Viari A."/>
            <person name="Wambutt R."/>
            <person name="Wedler E."/>
            <person name="Wedler H."/>
            <person name="Weitzenegger T."/>
            <person name="Winters P."/>
            <person name="Wipat A."/>
            <person name="Yamamoto H."/>
            <person name="Yamane K."/>
            <person name="Yasumoto K."/>
            <person name="Yata K."/>
            <person name="Yoshida K."/>
            <person name="Yoshikawa H.-F."/>
            <person name="Zumstein E."/>
            <person name="Yoshikawa H."/>
            <person name="Danchin A."/>
        </authorList>
    </citation>
    <scope>NUCLEOTIDE SEQUENCE [LARGE SCALE GENOMIC DNA]</scope>
    <source>
        <strain>168</strain>
    </source>
</reference>
<reference key="3">
    <citation type="journal article" date="2003" name="J. Bacteriol.">
        <title>Regulation of the Bacillus subtilis extracytoplasmic function protein sigma(Y) and its target promoters.</title>
        <authorList>
            <person name="Cao M."/>
            <person name="Salzberg L."/>
            <person name="Tsai C.S."/>
            <person name="Mascher T."/>
            <person name="Bonilla C."/>
            <person name="Wang T."/>
            <person name="Ye R.W."/>
            <person name="Marquez-Magana L."/>
            <person name="Helmann J.D."/>
        </authorList>
    </citation>
    <scope>FUNCTION AS A NEGATIVE REGULATOR OF SIGMA Y</scope>
    <source>
        <strain>168 / CU1065</strain>
    </source>
</reference>
<reference key="4">
    <citation type="journal article" date="2003" name="J. Biochem.">
        <title>Organization and expression of the Bacillus subtilis sigY operon.</title>
        <authorList>
            <person name="Tojo S."/>
            <person name="Matsunaga M."/>
            <person name="Matsumoto T."/>
            <person name="Kang C.-M."/>
            <person name="Yamaguchi H."/>
            <person name="Asai K."/>
            <person name="Sadaie Y."/>
            <person name="Yoshida K."/>
            <person name="Fujita Y."/>
        </authorList>
    </citation>
    <scope>INDUCTION</scope>
    <source>
        <strain>168</strain>
    </source>
</reference>
<sequence length="62" mass="7085">MNISWEMILPLIVLQLALAVFALISCIKEERTNGPKWMWAAIIVCINIIGPILFFTVGRKQR</sequence>
<dbReference type="EMBL" id="D83026">
    <property type="protein sequence ID" value="BAA11736.1"/>
    <property type="molecule type" value="Genomic_DNA"/>
</dbReference>
<dbReference type="EMBL" id="AL009126">
    <property type="protein sequence ID" value="CAB15893.1"/>
    <property type="molecule type" value="Genomic_DNA"/>
</dbReference>
<dbReference type="PIR" id="H70081">
    <property type="entry name" value="H70081"/>
</dbReference>
<dbReference type="RefSeq" id="NP_391746.1">
    <property type="nucleotide sequence ID" value="NC_000964.3"/>
</dbReference>
<dbReference type="RefSeq" id="WP_003227293.1">
    <property type="nucleotide sequence ID" value="NZ_OZ025638.1"/>
</dbReference>
<dbReference type="FunCoup" id="P94373">
    <property type="interactions" value="8"/>
</dbReference>
<dbReference type="STRING" id="224308.BSU38670"/>
<dbReference type="PaxDb" id="224308-BSU38670"/>
<dbReference type="EnsemblBacteria" id="CAB15893">
    <property type="protein sequence ID" value="CAB15893"/>
    <property type="gene ID" value="BSU_38670"/>
</dbReference>
<dbReference type="GeneID" id="86871500"/>
<dbReference type="GeneID" id="937395"/>
<dbReference type="KEGG" id="bsu:BSU38670"/>
<dbReference type="PATRIC" id="fig|224308.179.peg.4186"/>
<dbReference type="eggNOG" id="ENOG50332VC">
    <property type="taxonomic scope" value="Bacteria"/>
</dbReference>
<dbReference type="InParanoid" id="P94373"/>
<dbReference type="OrthoDB" id="3243324at2"/>
<dbReference type="BioCyc" id="BSUB:BSU38670-MONOMER"/>
<dbReference type="Proteomes" id="UP000001570">
    <property type="component" value="Chromosome"/>
</dbReference>
<dbReference type="GO" id="GO:0005886">
    <property type="term" value="C:plasma membrane"/>
    <property type="evidence" value="ECO:0007669"/>
    <property type="project" value="UniProtKB-SubCell"/>
</dbReference>
<dbReference type="InterPro" id="IPR027379">
    <property type="entry name" value="CLS_N"/>
</dbReference>
<dbReference type="Pfam" id="PF13396">
    <property type="entry name" value="PLDc_N"/>
    <property type="match status" value="1"/>
</dbReference>
<comment type="function">
    <text evidence="2">Together with YxlD is important for negative regulation of sigma Y activity.</text>
</comment>
<comment type="subcellular location">
    <subcellularLocation>
        <location evidence="4">Cell membrane</location>
        <topology evidence="4">Multi-pass membrane protein</topology>
    </subcellularLocation>
</comment>
<comment type="induction">
    <text evidence="3">Expression is sigma Y-dependent. Induced upon nitrogen starvation.</text>
</comment>
<evidence type="ECO:0000255" key="1"/>
<evidence type="ECO:0000269" key="2">
    <source>
    </source>
</evidence>
<evidence type="ECO:0000269" key="3">
    <source>
    </source>
</evidence>
<evidence type="ECO:0000305" key="4"/>
<name>YXLE_BACSU</name>
<accession>P94373</accession>
<accession>Q794Y3</accession>
<organism>
    <name type="scientific">Bacillus subtilis (strain 168)</name>
    <dbReference type="NCBI Taxonomy" id="224308"/>
    <lineage>
        <taxon>Bacteria</taxon>
        <taxon>Bacillati</taxon>
        <taxon>Bacillota</taxon>
        <taxon>Bacilli</taxon>
        <taxon>Bacillales</taxon>
        <taxon>Bacillaceae</taxon>
        <taxon>Bacillus</taxon>
    </lineage>
</organism>
<feature type="chain" id="PRO_0000383354" description="Negative regulatory protein YxlE">
    <location>
        <begin position="1"/>
        <end position="62"/>
    </location>
</feature>
<feature type="transmembrane region" description="Helical" evidence="1">
    <location>
        <begin position="7"/>
        <end position="27"/>
    </location>
</feature>
<feature type="transmembrane region" description="Helical" evidence="1">
    <location>
        <begin position="37"/>
        <end position="57"/>
    </location>
</feature>
<protein>
    <recommendedName>
        <fullName>Negative regulatory protein YxlE</fullName>
    </recommendedName>
</protein>
<gene>
    <name type="primary">yxlE</name>
    <name type="ordered locus">BSU38670</name>
</gene>
<proteinExistence type="evidence at protein level"/>